<gene>
    <name type="primary">sodA</name>
</gene>
<feature type="chain" id="PRO_0000223465" description="Superoxide dismutase [Mn/Fe]">
    <location>
        <begin position="1"/>
        <end position="199"/>
    </location>
</feature>
<feature type="binding site" evidence="2">
    <location>
        <position position="27"/>
    </location>
    <ligand>
        <name>Fe(3+)</name>
        <dbReference type="ChEBI" id="CHEBI:29034"/>
    </ligand>
</feature>
<feature type="binding site" evidence="2">
    <location>
        <position position="27"/>
    </location>
    <ligand>
        <name>Mn(2+)</name>
        <dbReference type="ChEBI" id="CHEBI:29035"/>
    </ligand>
</feature>
<feature type="binding site" evidence="2">
    <location>
        <position position="81"/>
    </location>
    <ligand>
        <name>Fe(3+)</name>
        <dbReference type="ChEBI" id="CHEBI:29034"/>
    </ligand>
</feature>
<feature type="binding site" evidence="2">
    <location>
        <position position="81"/>
    </location>
    <ligand>
        <name>Mn(2+)</name>
        <dbReference type="ChEBI" id="CHEBI:29035"/>
    </ligand>
</feature>
<feature type="binding site" evidence="2">
    <location>
        <position position="161"/>
    </location>
    <ligand>
        <name>Fe(3+)</name>
        <dbReference type="ChEBI" id="CHEBI:29034"/>
    </ligand>
</feature>
<feature type="binding site" evidence="2">
    <location>
        <position position="161"/>
    </location>
    <ligand>
        <name>Mn(2+)</name>
        <dbReference type="ChEBI" id="CHEBI:29035"/>
    </ligand>
</feature>
<feature type="binding site" evidence="2">
    <location>
        <position position="165"/>
    </location>
    <ligand>
        <name>Fe(3+)</name>
        <dbReference type="ChEBI" id="CHEBI:29034"/>
    </ligand>
</feature>
<feature type="binding site" evidence="2">
    <location>
        <position position="165"/>
    </location>
    <ligand>
        <name>Mn(2+)</name>
        <dbReference type="ChEBI" id="CHEBI:29035"/>
    </ligand>
</feature>
<feature type="sequence conflict" description="In Ref. 2; CAA65734." evidence="3" ref="2">
    <original>F</original>
    <variation>Y</variation>
    <location>
        <position position="12"/>
    </location>
</feature>
<feature type="sequence conflict" description="In Ref. 2 and 3." evidence="3" ref="2 3">
    <original>E</original>
    <variation>Q</variation>
    <location>
        <position position="22"/>
    </location>
</feature>
<feature type="sequence conflict" description="In Ref. 2 and 3." evidence="3" ref="2 3">
    <original>AV</original>
    <variation>SA</variation>
    <location>
        <begin position="41"/>
        <end position="42"/>
    </location>
</feature>
<feature type="sequence conflict" description="In Ref. 3; CAC86481/CAC86528/CAC86529/CAC86530." evidence="3" ref="3">
    <original>D</original>
    <variation>N</variation>
    <location>
        <position position="66"/>
    </location>
</feature>
<feature type="sequence conflict" description="In Ref. 3; CAC86481/CAC86528/CAC86529/CAC86530." evidence="3" ref="3">
    <original>T</original>
    <variation>S</variation>
    <location>
        <position position="89"/>
    </location>
</feature>
<feature type="sequence conflict" description="In Ref. 3; CAC86481/CAC86528/CAC86529/CAC86530." evidence="3" ref="3">
    <original>E</original>
    <variation>D</variation>
    <location>
        <position position="100"/>
    </location>
</feature>
<feature type="sequence conflict" description="In Ref. 3; CAC86481/CAC86528/CAC86529/CAC86530." evidence="3" ref="3">
    <original>L</original>
    <variation>I</variation>
    <location>
        <position position="150"/>
    </location>
</feature>
<accession>Q8VQ15</accession>
<accession>Q54103</accession>
<accession>Q8VLL5</accession>
<sequence length="199" mass="22706">MAFELPKLPYAFDALEPHIDKETMEIHHDKHHNTYVTKLNAVVEGTDLEAKSIEEIVANLDSVPSDIQTAVRNNGGGHLNHSLFWELLTPNSEEKGEVVEKIKEQWGSLDEFKKEFADKAAARFGSGWAWLVVNNGQLEIVTTPNQDNPLTEGKTPILGLDVWEHAYYLKYQNKRPDYISAFWNVVNWEKVDELYNAAK</sequence>
<reference key="1">
    <citation type="submission" date="2001-12" db="EMBL/GenBank/DDBJ databases">
        <title>Cloning, sequencing, and characterization of sodA gene from Staphylococcus epidermidis.</title>
        <authorList>
            <person name="Chiou J."/>
            <person name="Yang C.-W."/>
            <person name="Chiou J.-F."/>
        </authorList>
    </citation>
    <scope>NUCLEOTIDE SEQUENCE [GENOMIC DNA]</scope>
</reference>
<reference key="2">
    <citation type="journal article" date="1996" name="FEMS Microbiol. Lett.">
        <title>Identification and analysis of a gene encoding a Fur-like protein of Staphylococcus epidermidis.</title>
        <authorList>
            <person name="Heidrich C."/>
            <person name="Hantke K."/>
            <person name="Bierbaum G."/>
            <person name="Sahl H.-G."/>
        </authorList>
    </citation>
    <scope>NUCLEOTIDE SEQUENCE [GENOMIC DNA] OF 1-68</scope>
    <source>
        <strain>BN 280</strain>
    </source>
</reference>
<reference key="3">
    <citation type="journal article" date="2001" name="J. Clin. Microbiol.">
        <title>Rapid and accurate species-level identification of coagulase-negative staphylococci by using the sodA gene as a target.</title>
        <authorList>
            <person name="Poyart C."/>
            <person name="Quesne G."/>
            <person name="Boumaila C."/>
            <person name="Trieu-Cuot P."/>
        </authorList>
    </citation>
    <scope>NUCLEOTIDE SEQUENCE [GENOMIC DNA] OF 18-160</scope>
    <scope>CATALYTIC ACTIVITY</scope>
    <source>
        <strain>ATCC 14990 / DSM 20044 / CIP 81.55 / NCTC 11047</strain>
        <strain>NEM2008</strain>
        <strain>NEM2009</strain>
        <strain>NEM2010</strain>
    </source>
</reference>
<reference key="4">
    <citation type="journal article" date="2002" name="J. Bacteriol.">
        <title>The superoxide dismutase gene sodM is unique to Staphylococcus aureus: absence of sodM in coagulase-negative staphylococci.</title>
        <authorList>
            <person name="Wright Valderas M."/>
            <person name="Gatson J.W."/>
            <person name="Wreyford N."/>
            <person name="Hart M.E."/>
        </authorList>
    </citation>
    <scope>CATALYTIC ACTIVITY</scope>
    <source>
        <strain>HAC111</strain>
        <strain>HAC112</strain>
        <strain>HAC113</strain>
        <strain>HAC114</strain>
        <strain>HAC115</strain>
        <strain>HAC33</strain>
        <strain>HAC36</strain>
        <strain>HAC94</strain>
    </source>
</reference>
<name>SODM_STAEP</name>
<comment type="function">
    <text evidence="2">Destroys superoxide anion radicals which are normally produced within the cells and which are toxic to biological systems. Catalyzes the dismutation of superoxide anion radicals into O2 and H2O2 by successive reduction and oxidation of the transition metal ion at the active site.</text>
</comment>
<comment type="catalytic activity">
    <reaction evidence="4 5">
        <text>2 superoxide + 2 H(+) = H2O2 + O2</text>
        <dbReference type="Rhea" id="RHEA:20696"/>
        <dbReference type="ChEBI" id="CHEBI:15378"/>
        <dbReference type="ChEBI" id="CHEBI:15379"/>
        <dbReference type="ChEBI" id="CHEBI:16240"/>
        <dbReference type="ChEBI" id="CHEBI:18421"/>
        <dbReference type="EC" id="1.15.1.1"/>
    </reaction>
    <physiologicalReaction direction="left-to-right" evidence="4 5">
        <dbReference type="Rhea" id="RHEA:20697"/>
    </physiologicalReaction>
</comment>
<comment type="cofactor">
    <cofactor evidence="2">
        <name>Mn(2+)</name>
        <dbReference type="ChEBI" id="CHEBI:29035"/>
    </cofactor>
    <cofactor evidence="2">
        <name>Fe(3+)</name>
        <dbReference type="ChEBI" id="CHEBI:29034"/>
    </cofactor>
    <text evidence="2">Binds 1 Mn(2+) or Fe(3+) ion per subunit.</text>
</comment>
<comment type="subunit">
    <text evidence="1">Homodimer.</text>
</comment>
<comment type="similarity">
    <text evidence="3">Belongs to the iron/manganese superoxide dismutase family.</text>
</comment>
<protein>
    <recommendedName>
        <fullName>Superoxide dismutase [Mn/Fe]</fullName>
        <ecNumber evidence="4 5">1.15.1.1</ecNumber>
    </recommendedName>
</protein>
<dbReference type="EC" id="1.15.1.1" evidence="4 5"/>
<dbReference type="EMBL" id="AF462457">
    <property type="protein sequence ID" value="AAL68691.1"/>
    <property type="molecule type" value="Genomic_DNA"/>
</dbReference>
<dbReference type="EMBL" id="X97011">
    <property type="protein sequence ID" value="CAA65734.1"/>
    <property type="molecule type" value="Genomic_DNA"/>
</dbReference>
<dbReference type="EMBL" id="AJ343906">
    <property type="protein sequence ID" value="CAC86481.1"/>
    <property type="molecule type" value="Genomic_DNA"/>
</dbReference>
<dbReference type="EMBL" id="AJ343946">
    <property type="protein sequence ID" value="CAC86528.1"/>
    <property type="molecule type" value="Genomic_DNA"/>
</dbReference>
<dbReference type="EMBL" id="AJ343947">
    <property type="protein sequence ID" value="CAC86529.1"/>
    <property type="molecule type" value="Genomic_DNA"/>
</dbReference>
<dbReference type="EMBL" id="AJ343948">
    <property type="protein sequence ID" value="CAC86530.1"/>
    <property type="molecule type" value="Genomic_DNA"/>
</dbReference>
<dbReference type="SMR" id="Q8VQ15"/>
<dbReference type="GO" id="GO:0005737">
    <property type="term" value="C:cytoplasm"/>
    <property type="evidence" value="ECO:0007669"/>
    <property type="project" value="TreeGrafter"/>
</dbReference>
<dbReference type="GO" id="GO:0046872">
    <property type="term" value="F:metal ion binding"/>
    <property type="evidence" value="ECO:0007669"/>
    <property type="project" value="UniProtKB-KW"/>
</dbReference>
<dbReference type="GO" id="GO:0004784">
    <property type="term" value="F:superoxide dismutase activity"/>
    <property type="evidence" value="ECO:0007669"/>
    <property type="project" value="UniProtKB-EC"/>
</dbReference>
<dbReference type="FunFam" id="1.10.287.990:FF:000001">
    <property type="entry name" value="Superoxide dismutase"/>
    <property type="match status" value="1"/>
</dbReference>
<dbReference type="FunFam" id="3.55.40.20:FF:000001">
    <property type="entry name" value="Superoxide dismutase"/>
    <property type="match status" value="1"/>
</dbReference>
<dbReference type="Gene3D" id="1.10.287.990">
    <property type="entry name" value="Fe,Mn superoxide dismutase (SOD) domain"/>
    <property type="match status" value="1"/>
</dbReference>
<dbReference type="Gene3D" id="3.55.40.20">
    <property type="entry name" value="Iron/manganese superoxide dismutase, C-terminal domain"/>
    <property type="match status" value="1"/>
</dbReference>
<dbReference type="InterPro" id="IPR001189">
    <property type="entry name" value="Mn/Fe_SOD"/>
</dbReference>
<dbReference type="InterPro" id="IPR019833">
    <property type="entry name" value="Mn/Fe_SOD_BS"/>
</dbReference>
<dbReference type="InterPro" id="IPR019832">
    <property type="entry name" value="Mn/Fe_SOD_C"/>
</dbReference>
<dbReference type="InterPro" id="IPR019831">
    <property type="entry name" value="Mn/Fe_SOD_N"/>
</dbReference>
<dbReference type="InterPro" id="IPR036324">
    <property type="entry name" value="Mn/Fe_SOD_N_sf"/>
</dbReference>
<dbReference type="InterPro" id="IPR036314">
    <property type="entry name" value="SOD_C_sf"/>
</dbReference>
<dbReference type="PANTHER" id="PTHR43595">
    <property type="entry name" value="37S RIBOSOMAL PROTEIN S26, MITOCHONDRIAL"/>
    <property type="match status" value="1"/>
</dbReference>
<dbReference type="PANTHER" id="PTHR43595:SF2">
    <property type="entry name" value="SMALL RIBOSOMAL SUBUNIT PROTEIN MS42"/>
    <property type="match status" value="1"/>
</dbReference>
<dbReference type="Pfam" id="PF02777">
    <property type="entry name" value="Sod_Fe_C"/>
    <property type="match status" value="1"/>
</dbReference>
<dbReference type="Pfam" id="PF00081">
    <property type="entry name" value="Sod_Fe_N"/>
    <property type="match status" value="1"/>
</dbReference>
<dbReference type="PIRSF" id="PIRSF000349">
    <property type="entry name" value="SODismutase"/>
    <property type="match status" value="1"/>
</dbReference>
<dbReference type="PRINTS" id="PR01703">
    <property type="entry name" value="MNSODISMTASE"/>
</dbReference>
<dbReference type="SUPFAM" id="SSF54719">
    <property type="entry name" value="Fe,Mn superoxide dismutase (SOD), C-terminal domain"/>
    <property type="match status" value="1"/>
</dbReference>
<dbReference type="SUPFAM" id="SSF46609">
    <property type="entry name" value="Fe,Mn superoxide dismutase (SOD), N-terminal domain"/>
    <property type="match status" value="1"/>
</dbReference>
<dbReference type="PROSITE" id="PS00088">
    <property type="entry name" value="SOD_MN"/>
    <property type="match status" value="1"/>
</dbReference>
<proteinExistence type="evidence at protein level"/>
<organism>
    <name type="scientific">Staphylococcus epidermidis</name>
    <dbReference type="NCBI Taxonomy" id="1282"/>
    <lineage>
        <taxon>Bacteria</taxon>
        <taxon>Bacillati</taxon>
        <taxon>Bacillota</taxon>
        <taxon>Bacilli</taxon>
        <taxon>Bacillales</taxon>
        <taxon>Staphylococcaceae</taxon>
        <taxon>Staphylococcus</taxon>
    </lineage>
</organism>
<keyword id="KW-0408">Iron</keyword>
<keyword id="KW-0464">Manganese</keyword>
<keyword id="KW-0479">Metal-binding</keyword>
<keyword id="KW-0560">Oxidoreductase</keyword>
<keyword id="KW-0346">Stress response</keyword>
<evidence type="ECO:0000250" key="1"/>
<evidence type="ECO:0000250" key="2">
    <source>
        <dbReference type="UniProtKB" id="P80293"/>
    </source>
</evidence>
<evidence type="ECO:0000305" key="3"/>
<evidence type="ECO:0000305" key="4">
    <source>
    </source>
</evidence>
<evidence type="ECO:0000305" key="5">
    <source>
    </source>
</evidence>